<protein>
    <recommendedName>
        <fullName>Uncharacterized transmembrane protein C343.21</fullName>
    </recommendedName>
</protein>
<name>YIP21_SCHPO</name>
<evidence type="ECO:0000255" key="1"/>
<evidence type="ECO:0000305" key="2"/>
<sequence>MVSYNVLTKLFFIFSGGLVFFFFEFFLNHFNYYPTKLLYYITFYFIKNHPSLFLLFNFFLSTASFSYSFPSKSHLTFYSKGAPSVFFLSLKSSPCPGYCSSTLLYSTSNLLPSLPSPLHAPPPLGSRLLHVFFYRRSNASAYPSFTPRYSFFPSFTLR</sequence>
<organism>
    <name type="scientific">Schizosaccharomyces pombe (strain 972 / ATCC 24843)</name>
    <name type="common">Fission yeast</name>
    <dbReference type="NCBI Taxonomy" id="284812"/>
    <lineage>
        <taxon>Eukaryota</taxon>
        <taxon>Fungi</taxon>
        <taxon>Dikarya</taxon>
        <taxon>Ascomycota</taxon>
        <taxon>Taphrinomycotina</taxon>
        <taxon>Schizosaccharomycetes</taxon>
        <taxon>Schizosaccharomycetales</taxon>
        <taxon>Schizosaccharomycetaceae</taxon>
        <taxon>Schizosaccharomyces</taxon>
    </lineage>
</organism>
<reference key="1">
    <citation type="journal article" date="2002" name="Nature">
        <title>The genome sequence of Schizosaccharomyces pombe.</title>
        <authorList>
            <person name="Wood V."/>
            <person name="Gwilliam R."/>
            <person name="Rajandream M.A."/>
            <person name="Lyne M.H."/>
            <person name="Lyne R."/>
            <person name="Stewart A."/>
            <person name="Sgouros J.G."/>
            <person name="Peat N."/>
            <person name="Hayles J."/>
            <person name="Baker S.G."/>
            <person name="Basham D."/>
            <person name="Bowman S."/>
            <person name="Brooks K."/>
            <person name="Brown D."/>
            <person name="Brown S."/>
            <person name="Chillingworth T."/>
            <person name="Churcher C.M."/>
            <person name="Collins M."/>
            <person name="Connor R."/>
            <person name="Cronin A."/>
            <person name="Davis P."/>
            <person name="Feltwell T."/>
            <person name="Fraser A."/>
            <person name="Gentles S."/>
            <person name="Goble A."/>
            <person name="Hamlin N."/>
            <person name="Harris D.E."/>
            <person name="Hidalgo J."/>
            <person name="Hodgson G."/>
            <person name="Holroyd S."/>
            <person name="Hornsby T."/>
            <person name="Howarth S."/>
            <person name="Huckle E.J."/>
            <person name="Hunt S."/>
            <person name="Jagels K."/>
            <person name="James K.D."/>
            <person name="Jones L."/>
            <person name="Jones M."/>
            <person name="Leather S."/>
            <person name="McDonald S."/>
            <person name="McLean J."/>
            <person name="Mooney P."/>
            <person name="Moule S."/>
            <person name="Mungall K.L."/>
            <person name="Murphy L.D."/>
            <person name="Niblett D."/>
            <person name="Odell C."/>
            <person name="Oliver K."/>
            <person name="O'Neil S."/>
            <person name="Pearson D."/>
            <person name="Quail M.A."/>
            <person name="Rabbinowitsch E."/>
            <person name="Rutherford K.M."/>
            <person name="Rutter S."/>
            <person name="Saunders D."/>
            <person name="Seeger K."/>
            <person name="Sharp S."/>
            <person name="Skelton J."/>
            <person name="Simmonds M.N."/>
            <person name="Squares R."/>
            <person name="Squares S."/>
            <person name="Stevens K."/>
            <person name="Taylor K."/>
            <person name="Taylor R.G."/>
            <person name="Tivey A."/>
            <person name="Walsh S.V."/>
            <person name="Warren T."/>
            <person name="Whitehead S."/>
            <person name="Woodward J.R."/>
            <person name="Volckaert G."/>
            <person name="Aert R."/>
            <person name="Robben J."/>
            <person name="Grymonprez B."/>
            <person name="Weltjens I."/>
            <person name="Vanstreels E."/>
            <person name="Rieger M."/>
            <person name="Schaefer M."/>
            <person name="Mueller-Auer S."/>
            <person name="Gabel C."/>
            <person name="Fuchs M."/>
            <person name="Duesterhoeft A."/>
            <person name="Fritzc C."/>
            <person name="Holzer E."/>
            <person name="Moestl D."/>
            <person name="Hilbert H."/>
            <person name="Borzym K."/>
            <person name="Langer I."/>
            <person name="Beck A."/>
            <person name="Lehrach H."/>
            <person name="Reinhardt R."/>
            <person name="Pohl T.M."/>
            <person name="Eger P."/>
            <person name="Zimmermann W."/>
            <person name="Wedler H."/>
            <person name="Wambutt R."/>
            <person name="Purnelle B."/>
            <person name="Goffeau A."/>
            <person name="Cadieu E."/>
            <person name="Dreano S."/>
            <person name="Gloux S."/>
            <person name="Lelaure V."/>
            <person name="Mottier S."/>
            <person name="Galibert F."/>
            <person name="Aves S.J."/>
            <person name="Xiang Z."/>
            <person name="Hunt C."/>
            <person name="Moore K."/>
            <person name="Hurst S.M."/>
            <person name="Lucas M."/>
            <person name="Rochet M."/>
            <person name="Gaillardin C."/>
            <person name="Tallada V.A."/>
            <person name="Garzon A."/>
            <person name="Thode G."/>
            <person name="Daga R.R."/>
            <person name="Cruzado L."/>
            <person name="Jimenez J."/>
            <person name="Sanchez M."/>
            <person name="del Rey F."/>
            <person name="Benito J."/>
            <person name="Dominguez A."/>
            <person name="Revuelta J.L."/>
            <person name="Moreno S."/>
            <person name="Armstrong J."/>
            <person name="Forsburg S.L."/>
            <person name="Cerutti L."/>
            <person name="Lowe T."/>
            <person name="McCombie W.R."/>
            <person name="Paulsen I."/>
            <person name="Potashkin J."/>
            <person name="Shpakovski G.V."/>
            <person name="Ussery D."/>
            <person name="Barrell B.G."/>
            <person name="Nurse P."/>
        </authorList>
    </citation>
    <scope>NUCLEOTIDE SEQUENCE [LARGE SCALE GENOMIC DNA]</scope>
    <source>
        <strain>972 / ATCC 24843</strain>
    </source>
</reference>
<reference key="2">
    <citation type="journal article" date="2011" name="Science">
        <title>Comparative functional genomics of the fission yeasts.</title>
        <authorList>
            <person name="Rhind N."/>
            <person name="Chen Z."/>
            <person name="Yassour M."/>
            <person name="Thompson D.A."/>
            <person name="Haas B.J."/>
            <person name="Habib N."/>
            <person name="Wapinski I."/>
            <person name="Roy S."/>
            <person name="Lin M.F."/>
            <person name="Heiman D.I."/>
            <person name="Young S.K."/>
            <person name="Furuya K."/>
            <person name="Guo Y."/>
            <person name="Pidoux A."/>
            <person name="Chen H.M."/>
            <person name="Robbertse B."/>
            <person name="Goldberg J.M."/>
            <person name="Aoki K."/>
            <person name="Bayne E.H."/>
            <person name="Berlin A.M."/>
            <person name="Desjardins C.A."/>
            <person name="Dobbs E."/>
            <person name="Dukaj L."/>
            <person name="Fan L."/>
            <person name="FitzGerald M.G."/>
            <person name="French C."/>
            <person name="Gujja S."/>
            <person name="Hansen K."/>
            <person name="Keifenheim D."/>
            <person name="Levin J.Z."/>
            <person name="Mosher R.A."/>
            <person name="Mueller C.A."/>
            <person name="Pfiffner J."/>
            <person name="Priest M."/>
            <person name="Russ C."/>
            <person name="Smialowska A."/>
            <person name="Swoboda P."/>
            <person name="Sykes S.M."/>
            <person name="Vaughn M."/>
            <person name="Vengrova S."/>
            <person name="Yoder R."/>
            <person name="Zeng Q."/>
            <person name="Allshire R."/>
            <person name="Baulcombe D."/>
            <person name="Birren B.W."/>
            <person name="Brown W."/>
            <person name="Ekwall K."/>
            <person name="Kellis M."/>
            <person name="Leatherwood J."/>
            <person name="Levin H."/>
            <person name="Margalit H."/>
            <person name="Martienssen R."/>
            <person name="Nieduszynski C.A."/>
            <person name="Spatafora J.W."/>
            <person name="Friedman N."/>
            <person name="Dalgaard J.Z."/>
            <person name="Baumann P."/>
            <person name="Niki H."/>
            <person name="Regev A."/>
            <person name="Nusbaum C."/>
        </authorList>
    </citation>
    <scope>IDENTIFICATION</scope>
</reference>
<keyword id="KW-0472">Membrane</keyword>
<keyword id="KW-1185">Reference proteome</keyword>
<keyword id="KW-0812">Transmembrane</keyword>
<keyword id="KW-1133">Transmembrane helix</keyword>
<gene>
    <name type="ORF">SPAC343.21</name>
</gene>
<dbReference type="EMBL" id="CU329670">
    <property type="protein sequence ID" value="CCD31311.1"/>
    <property type="molecule type" value="Genomic_DNA"/>
</dbReference>
<dbReference type="RefSeq" id="XP_004001766.1">
    <property type="nucleotide sequence ID" value="XM_004001717.1"/>
</dbReference>
<dbReference type="BioGRID" id="4254460">
    <property type="interactions" value="1"/>
</dbReference>
<dbReference type="PaxDb" id="4896-SPAC343.21.1"/>
<dbReference type="EnsemblFungi" id="SPAC343.21.1">
    <property type="protein sequence ID" value="SPAC343.21.1:pep"/>
    <property type="gene ID" value="SPAC343.21"/>
</dbReference>
<dbReference type="PomBase" id="SPAC343.21"/>
<dbReference type="VEuPathDB" id="FungiDB:SPAC343.21"/>
<dbReference type="HOGENOM" id="CLU_1670410_0_0_1"/>
<dbReference type="InParanoid" id="G2TRK0"/>
<dbReference type="PRO" id="PR:G2TRK0"/>
<dbReference type="Proteomes" id="UP000002485">
    <property type="component" value="Chromosome I"/>
</dbReference>
<dbReference type="GO" id="GO:0016020">
    <property type="term" value="C:membrane"/>
    <property type="evidence" value="ECO:0007669"/>
    <property type="project" value="UniProtKB-SubCell"/>
</dbReference>
<accession>G2TRK0</accession>
<feature type="chain" id="PRO_0000416642" description="Uncharacterized transmembrane protein C343.21">
    <location>
        <begin position="1"/>
        <end position="158"/>
    </location>
</feature>
<feature type="transmembrane region" description="Helical" evidence="1">
    <location>
        <begin position="10"/>
        <end position="30"/>
    </location>
</feature>
<feature type="transmembrane region" description="Helical" evidence="1">
    <location>
        <begin position="40"/>
        <end position="60"/>
    </location>
</feature>
<proteinExistence type="predicted"/>
<comment type="subcellular location">
    <subcellularLocation>
        <location evidence="2">Membrane</location>
        <topology evidence="2">Multi-pass membrane protein</topology>
    </subcellularLocation>
</comment>